<comment type="function">
    <text evidence="1">Removes the phosphate from trehalose 6-phosphate to produce free trehalose.</text>
</comment>
<comment type="catalytic activity">
    <reaction>
        <text>alpha,alpha-trehalose 6-phosphate + H2O = alpha,alpha-trehalose + phosphate</text>
        <dbReference type="Rhea" id="RHEA:23420"/>
        <dbReference type="ChEBI" id="CHEBI:15377"/>
        <dbReference type="ChEBI" id="CHEBI:16551"/>
        <dbReference type="ChEBI" id="CHEBI:43474"/>
        <dbReference type="ChEBI" id="CHEBI:58429"/>
        <dbReference type="EC" id="3.1.3.12"/>
    </reaction>
</comment>
<comment type="cofactor">
    <cofactor evidence="1">
        <name>Mg(2+)</name>
        <dbReference type="ChEBI" id="CHEBI:18420"/>
    </cofactor>
</comment>
<comment type="pathway">
    <text>Glycan biosynthesis; trehalose biosynthesis.</text>
</comment>
<comment type="similarity">
    <text evidence="2">Belongs to the trehalose phosphatase family.</text>
</comment>
<evidence type="ECO:0000250" key="1"/>
<evidence type="ECO:0000305" key="2"/>
<organism>
    <name type="scientific">Mycolicibacterium paratuberculosis (strain ATCC BAA-968 / K-10)</name>
    <name type="common">Mycobacterium paratuberculosis</name>
    <dbReference type="NCBI Taxonomy" id="262316"/>
    <lineage>
        <taxon>Bacteria</taxon>
        <taxon>Bacillati</taxon>
        <taxon>Actinomycetota</taxon>
        <taxon>Actinomycetes</taxon>
        <taxon>Mycobacteriales</taxon>
        <taxon>Mycobacteriaceae</taxon>
        <taxon>Mycobacterium</taxon>
        <taxon>Mycobacterium avium complex (MAC)</taxon>
    </lineage>
</organism>
<proteinExistence type="inferred from homology"/>
<keyword id="KW-0378">Hydrolase</keyword>
<keyword id="KW-0460">Magnesium</keyword>
<keyword id="KW-0479">Metal-binding</keyword>
<keyword id="KW-1185">Reference proteome</keyword>
<protein>
    <recommendedName>
        <fullName>Trehalose-phosphate phosphatase</fullName>
        <shortName>TPP</shortName>
        <ecNumber>3.1.3.12</ecNumber>
    </recommendedName>
    <alternativeName>
        <fullName>Trehalose-6-phosphate phosphatase</fullName>
    </alternativeName>
</protein>
<sequence>MGESGPVVIDPRRHDAVLFGVGDALGSALASQLGQIGVGTAAFAADGPAAAADRLRVRPGRCVVVAGDPAAVEAARTAGFALVIGLAPVGRDGDGLRGAGADAVVAELEQITVRTGDRRMSQLPDASQALTGGADGLAGRHPAVFFDFDGTLSDIVDDPDAARPVAGATAALTRLAARCPVAVLSGRDLADVTKRVGVLGIWYAGSHGFELTAPDGSHHQNDDAAAAIPVLAQAAGRLRDELGAIPGVVVEHKRFGVAVHYRNAARDRVGEVAAAVRAAGRHDALRVTTGREVIELRPDLDWDKGKTLHWVIEHLRRSGSGALTPVYLGDDITDEDAFDAVRGGPVQGVPILVRHNDDGDRATAALFALDSPARAAEFTERLADQLERGEG</sequence>
<dbReference type="EC" id="3.1.3.12"/>
<dbReference type="EMBL" id="AE016958">
    <property type="protein sequence ID" value="AAS06028.1"/>
    <property type="molecule type" value="Genomic_DNA"/>
</dbReference>
<dbReference type="RefSeq" id="WP_010949975.1">
    <property type="nucleotide sequence ID" value="NC_002944.2"/>
</dbReference>
<dbReference type="SMR" id="Q73U90"/>
<dbReference type="STRING" id="262316.MAP_3478"/>
<dbReference type="KEGG" id="mpa:MAP_3478"/>
<dbReference type="PATRIC" id="fig|262316.17.peg.3699"/>
<dbReference type="eggNOG" id="COG0637">
    <property type="taxonomic scope" value="Bacteria"/>
</dbReference>
<dbReference type="eggNOG" id="COG1877">
    <property type="taxonomic scope" value="Bacteria"/>
</dbReference>
<dbReference type="HOGENOM" id="CLU_037265_4_1_11"/>
<dbReference type="UniPathway" id="UPA00299"/>
<dbReference type="Proteomes" id="UP000000580">
    <property type="component" value="Chromosome"/>
</dbReference>
<dbReference type="GO" id="GO:0046872">
    <property type="term" value="F:metal ion binding"/>
    <property type="evidence" value="ECO:0007669"/>
    <property type="project" value="UniProtKB-KW"/>
</dbReference>
<dbReference type="GO" id="GO:0004805">
    <property type="term" value="F:trehalose-phosphatase activity"/>
    <property type="evidence" value="ECO:0007669"/>
    <property type="project" value="UniProtKB-EC"/>
</dbReference>
<dbReference type="GO" id="GO:0005992">
    <property type="term" value="P:trehalose biosynthetic process"/>
    <property type="evidence" value="ECO:0007669"/>
    <property type="project" value="UniProtKB-UniPathway"/>
</dbReference>
<dbReference type="CDD" id="cd01627">
    <property type="entry name" value="HAD_TPP"/>
    <property type="match status" value="1"/>
</dbReference>
<dbReference type="FunFam" id="3.30.70.1020:FF:000007">
    <property type="entry name" value="Trehalose 6-phosphate phosphatase"/>
    <property type="match status" value="1"/>
</dbReference>
<dbReference type="Gene3D" id="3.40.50.1000">
    <property type="entry name" value="HAD superfamily/HAD-like"/>
    <property type="match status" value="2"/>
</dbReference>
<dbReference type="Gene3D" id="3.30.70.1020">
    <property type="entry name" value="Trehalose-6-phosphate phosphatase related protein, domain 2"/>
    <property type="match status" value="1"/>
</dbReference>
<dbReference type="InterPro" id="IPR036412">
    <property type="entry name" value="HAD-like_sf"/>
</dbReference>
<dbReference type="InterPro" id="IPR006379">
    <property type="entry name" value="HAD-SF_hydro_IIB"/>
</dbReference>
<dbReference type="InterPro" id="IPR023214">
    <property type="entry name" value="HAD_sf"/>
</dbReference>
<dbReference type="InterPro" id="IPR044651">
    <property type="entry name" value="OTSB-like"/>
</dbReference>
<dbReference type="InterPro" id="IPR003337">
    <property type="entry name" value="Trehalose_PPase"/>
</dbReference>
<dbReference type="NCBIfam" id="TIGR01484">
    <property type="entry name" value="HAD-SF-IIB"/>
    <property type="match status" value="1"/>
</dbReference>
<dbReference type="NCBIfam" id="TIGR00685">
    <property type="entry name" value="T6PP"/>
    <property type="match status" value="1"/>
</dbReference>
<dbReference type="PANTHER" id="PTHR43768">
    <property type="entry name" value="TREHALOSE 6-PHOSPHATE PHOSPHATASE"/>
    <property type="match status" value="1"/>
</dbReference>
<dbReference type="PANTHER" id="PTHR43768:SF3">
    <property type="entry name" value="TREHALOSE 6-PHOSPHATE PHOSPHATASE"/>
    <property type="match status" value="1"/>
</dbReference>
<dbReference type="Pfam" id="PF02358">
    <property type="entry name" value="Trehalose_PPase"/>
    <property type="match status" value="1"/>
</dbReference>
<dbReference type="SUPFAM" id="SSF56784">
    <property type="entry name" value="HAD-like"/>
    <property type="match status" value="2"/>
</dbReference>
<accession>Q73U90</accession>
<name>OTSB_MYCPA</name>
<feature type="chain" id="PRO_0000370705" description="Trehalose-phosphate phosphatase">
    <location>
        <begin position="1"/>
        <end position="391"/>
    </location>
</feature>
<feature type="active site" description="Nucleophile" evidence="1">
    <location>
        <position position="147"/>
    </location>
</feature>
<feature type="binding site" evidence="1">
    <location>
        <begin position="147"/>
        <end position="149"/>
    </location>
    <ligand>
        <name>substrate</name>
    </ligand>
</feature>
<feature type="binding site" evidence="1">
    <location>
        <position position="147"/>
    </location>
    <ligand>
        <name>Mg(2+)</name>
        <dbReference type="ChEBI" id="CHEBI:18420"/>
    </ligand>
</feature>
<feature type="binding site" evidence="1">
    <location>
        <position position="149"/>
    </location>
    <ligand>
        <name>Mg(2+)</name>
        <dbReference type="ChEBI" id="CHEBI:18420"/>
    </ligand>
</feature>
<feature type="binding site" evidence="1">
    <location>
        <position position="330"/>
    </location>
    <ligand>
        <name>Mg(2+)</name>
        <dbReference type="ChEBI" id="CHEBI:18420"/>
    </ligand>
</feature>
<gene>
    <name type="primary">otsB</name>
    <name type="ordered locus">MAP_3478</name>
</gene>
<reference key="1">
    <citation type="journal article" date="2005" name="Proc. Natl. Acad. Sci. U.S.A.">
        <title>The complete genome sequence of Mycobacterium avium subspecies paratuberculosis.</title>
        <authorList>
            <person name="Li L."/>
            <person name="Bannantine J.P."/>
            <person name="Zhang Q."/>
            <person name="Amonsin A."/>
            <person name="May B.J."/>
            <person name="Alt D."/>
            <person name="Banerji N."/>
            <person name="Kanjilal S."/>
            <person name="Kapur V."/>
        </authorList>
    </citation>
    <scope>NUCLEOTIDE SEQUENCE [LARGE SCALE GENOMIC DNA]</scope>
    <source>
        <strain>ATCC BAA-968 / K-10</strain>
    </source>
</reference>